<evidence type="ECO:0000250" key="1"/>
<evidence type="ECO:0000255" key="2">
    <source>
        <dbReference type="PROSITE-ProRule" id="PRU01056"/>
    </source>
</evidence>
<evidence type="ECO:0000269" key="3">
    <source>
    </source>
</evidence>
<reference key="1">
    <citation type="submission" date="2004-09" db="EMBL/GenBank/DDBJ databases">
        <authorList>
            <consortium name="NIH - Xenopus Gene Collection (XGC) project"/>
        </authorList>
    </citation>
    <scope>NUCLEOTIDE SEQUENCE [LARGE SCALE MRNA]</scope>
    <source>
        <tissue>Embryo</tissue>
    </source>
</reference>
<reference key="2">
    <citation type="journal article" date="2010" name="Science">
        <title>Planar cell polarity acts through septins to control collective cell movement and ciliogenesis.</title>
        <authorList>
            <person name="Kim S.K."/>
            <person name="Shindo A."/>
            <person name="Park T.J."/>
            <person name="Oh E.C."/>
            <person name="Ghosh S."/>
            <person name="Gray R.S."/>
            <person name="Lewis R.A."/>
            <person name="Johnson C.A."/>
            <person name="Attie-Bittach T."/>
            <person name="Katsanis N."/>
            <person name="Wallingford J.B."/>
        </authorList>
    </citation>
    <scope>FUNCTION</scope>
</reference>
<protein>
    <recommendedName>
        <fullName>Septin-2B</fullName>
    </recommendedName>
</protein>
<feature type="chain" id="PRO_0000363222" description="Septin-2B">
    <location>
        <begin position="1"/>
        <end position="352"/>
    </location>
</feature>
<feature type="domain" description="Septin-type G" evidence="2">
    <location>
        <begin position="33"/>
        <end position="305"/>
    </location>
</feature>
<feature type="region of interest" description="G1 motif" evidence="2">
    <location>
        <begin position="43"/>
        <end position="50"/>
    </location>
</feature>
<feature type="region of interest" description="G3 motif" evidence="2">
    <location>
        <begin position="100"/>
        <end position="103"/>
    </location>
</feature>
<feature type="region of interest" description="G4 motif" evidence="2">
    <location>
        <begin position="181"/>
        <end position="184"/>
    </location>
</feature>
<feature type="region of interest" description="Important for dimerization" evidence="1">
    <location>
        <begin position="259"/>
        <end position="269"/>
    </location>
</feature>
<feature type="binding site" evidence="1">
    <location>
        <begin position="43"/>
        <end position="50"/>
    </location>
    <ligand>
        <name>GTP</name>
        <dbReference type="ChEBI" id="CHEBI:37565"/>
    </ligand>
</feature>
<feature type="binding site" evidence="1">
    <location>
        <position position="77"/>
    </location>
    <ligand>
        <name>GTP</name>
        <dbReference type="ChEBI" id="CHEBI:37565"/>
    </ligand>
</feature>
<feature type="binding site" evidence="1">
    <location>
        <position position="103"/>
    </location>
    <ligand>
        <name>GTP</name>
        <dbReference type="ChEBI" id="CHEBI:37565"/>
    </ligand>
</feature>
<feature type="binding site" evidence="1">
    <location>
        <begin position="182"/>
        <end position="190"/>
    </location>
    <ligand>
        <name>GTP</name>
        <dbReference type="ChEBI" id="CHEBI:37565"/>
    </ligand>
</feature>
<feature type="binding site" evidence="1">
    <location>
        <position position="240"/>
    </location>
    <ligand>
        <name>GTP</name>
        <dbReference type="ChEBI" id="CHEBI:37565"/>
    </ligand>
</feature>
<feature type="binding site" evidence="1">
    <location>
        <position position="255"/>
    </location>
    <ligand>
        <name>GTP</name>
        <dbReference type="ChEBI" id="CHEBI:37565"/>
    </ligand>
</feature>
<feature type="site" description="Important for dimerization" evidence="1">
    <location>
        <position position="155"/>
    </location>
</feature>
<gene>
    <name type="primary">sept2-b</name>
</gene>
<accession>Q63ZQ1</accession>
<dbReference type="EMBL" id="BC082859">
    <property type="protein sequence ID" value="AAH82859.1"/>
    <property type="molecule type" value="mRNA"/>
</dbReference>
<dbReference type="RefSeq" id="NP_001088062.1">
    <property type="nucleotide sequence ID" value="NM_001094593.1"/>
</dbReference>
<dbReference type="SMR" id="Q63ZQ1"/>
<dbReference type="IntAct" id="Q63ZQ1">
    <property type="interactions" value="1"/>
</dbReference>
<dbReference type="DNASU" id="494757"/>
<dbReference type="AGR" id="Xenbase:XB-GENE-6255319"/>
<dbReference type="Xenbase" id="XB-GENE-6255319">
    <property type="gene designation" value="septin2.S"/>
</dbReference>
<dbReference type="Proteomes" id="UP000186698">
    <property type="component" value="Unplaced"/>
</dbReference>
<dbReference type="Bgee" id="494757">
    <property type="expression patterns" value="Expressed in blastula and 19 other cell types or tissues"/>
</dbReference>
<dbReference type="GO" id="GO:0032153">
    <property type="term" value="C:cell division site"/>
    <property type="evidence" value="ECO:0000318"/>
    <property type="project" value="GO_Central"/>
</dbReference>
<dbReference type="GO" id="GO:0060170">
    <property type="term" value="C:ciliary membrane"/>
    <property type="evidence" value="ECO:0000250"/>
    <property type="project" value="UniProtKB"/>
</dbReference>
<dbReference type="GO" id="GO:0032154">
    <property type="term" value="C:cleavage furrow"/>
    <property type="evidence" value="ECO:0007669"/>
    <property type="project" value="UniProtKB-SubCell"/>
</dbReference>
<dbReference type="GO" id="GO:0005737">
    <property type="term" value="C:cytoplasm"/>
    <property type="evidence" value="ECO:0000250"/>
    <property type="project" value="UniProtKB"/>
</dbReference>
<dbReference type="GO" id="GO:0015630">
    <property type="term" value="C:microtubule cytoskeleton"/>
    <property type="evidence" value="ECO:0000318"/>
    <property type="project" value="GO_Central"/>
</dbReference>
<dbReference type="GO" id="GO:0030496">
    <property type="term" value="C:midbody"/>
    <property type="evidence" value="ECO:0007669"/>
    <property type="project" value="UniProtKB-SubCell"/>
</dbReference>
<dbReference type="GO" id="GO:0031105">
    <property type="term" value="C:septin complex"/>
    <property type="evidence" value="ECO:0000318"/>
    <property type="project" value="GO_Central"/>
</dbReference>
<dbReference type="GO" id="GO:0005940">
    <property type="term" value="C:septin ring"/>
    <property type="evidence" value="ECO:0000318"/>
    <property type="project" value="GO_Central"/>
</dbReference>
<dbReference type="GO" id="GO:0005819">
    <property type="term" value="C:spindle"/>
    <property type="evidence" value="ECO:0007669"/>
    <property type="project" value="UniProtKB-SubCell"/>
</dbReference>
<dbReference type="GO" id="GO:0005525">
    <property type="term" value="F:GTP binding"/>
    <property type="evidence" value="ECO:0007669"/>
    <property type="project" value="UniProtKB-KW"/>
</dbReference>
<dbReference type="GO" id="GO:0003924">
    <property type="term" value="F:GTPase activity"/>
    <property type="evidence" value="ECO:0000318"/>
    <property type="project" value="GO_Central"/>
</dbReference>
<dbReference type="GO" id="GO:0060090">
    <property type="term" value="F:molecular adaptor activity"/>
    <property type="evidence" value="ECO:0000318"/>
    <property type="project" value="GO_Central"/>
</dbReference>
<dbReference type="GO" id="GO:0060271">
    <property type="term" value="P:cilium assembly"/>
    <property type="evidence" value="ECO:0000250"/>
    <property type="project" value="UniProtKB"/>
</dbReference>
<dbReference type="GO" id="GO:0061640">
    <property type="term" value="P:cytoskeleton-dependent cytokinesis"/>
    <property type="evidence" value="ECO:0000318"/>
    <property type="project" value="GO_Central"/>
</dbReference>
<dbReference type="GO" id="GO:0008104">
    <property type="term" value="P:protein localization"/>
    <property type="evidence" value="ECO:0000318"/>
    <property type="project" value="GO_Central"/>
</dbReference>
<dbReference type="GO" id="GO:0007224">
    <property type="term" value="P:smoothened signaling pathway"/>
    <property type="evidence" value="ECO:0000250"/>
    <property type="project" value="UniProtKB"/>
</dbReference>
<dbReference type="CDD" id="cd01850">
    <property type="entry name" value="CDC_Septin"/>
    <property type="match status" value="1"/>
</dbReference>
<dbReference type="FunFam" id="3.40.50.300:FF:000064">
    <property type="entry name" value="Septin 4"/>
    <property type="match status" value="1"/>
</dbReference>
<dbReference type="Gene3D" id="3.40.50.300">
    <property type="entry name" value="P-loop containing nucleotide triphosphate hydrolases"/>
    <property type="match status" value="1"/>
</dbReference>
<dbReference type="InterPro" id="IPR030379">
    <property type="entry name" value="G_SEPTIN_dom"/>
</dbReference>
<dbReference type="InterPro" id="IPR027417">
    <property type="entry name" value="P-loop_NTPase"/>
</dbReference>
<dbReference type="InterPro" id="IPR016491">
    <property type="entry name" value="Septin"/>
</dbReference>
<dbReference type="InterPro" id="IPR008113">
    <property type="entry name" value="Septin2"/>
</dbReference>
<dbReference type="PANTHER" id="PTHR18884">
    <property type="entry name" value="SEPTIN"/>
    <property type="match status" value="1"/>
</dbReference>
<dbReference type="Pfam" id="PF00735">
    <property type="entry name" value="Septin"/>
    <property type="match status" value="1"/>
</dbReference>
<dbReference type="PIRSF" id="PIRSF006698">
    <property type="entry name" value="Septin"/>
    <property type="match status" value="1"/>
</dbReference>
<dbReference type="PRINTS" id="PR01740">
    <property type="entry name" value="SEPTIN2"/>
</dbReference>
<dbReference type="SUPFAM" id="SSF52540">
    <property type="entry name" value="P-loop containing nucleoside triphosphate hydrolases"/>
    <property type="match status" value="1"/>
</dbReference>
<dbReference type="PROSITE" id="PS51719">
    <property type="entry name" value="G_SEPTIN"/>
    <property type="match status" value="1"/>
</dbReference>
<comment type="function">
    <text evidence="1 3">Filament-forming cytoskeletal GTPase. Required for normal organization of the actin cytoskeleton. Plays a role in the biogenesis of polarized columnar-shaped epithelium. Required for the progression through mitosis through regulation of chromosome congression. During anaphase, may be required for chromosome segregation and spindle elongation (By similarity). Probably plays a role in ciliogenesis and collective cell movements including convergent extension during gastrulation. In cilia, required for the integrity of the diffusion barrier at the base of the primary cilium that prevents diffusion of transmembrane proteins between the cilia and plasma membranes. Controls cell shape and not polarization of cells during convergent extension.</text>
</comment>
<comment type="subunit">
    <text evidence="1">Septins polymerize into heterooligomeric protein complexes that form filaments, and associate with cellular membranes, actin filaments and microtubules. GTPase activity is required for filament formation. Can form heterooligomers with other family members and form filaments. Interacts with wdpcp (By similarity).</text>
</comment>
<comment type="subcellular location">
    <subcellularLocation>
        <location evidence="1">Cytoplasm</location>
    </subcellularLocation>
    <subcellularLocation>
        <location evidence="1">Cytoplasm</location>
        <location evidence="1">Cytoskeleton</location>
    </subcellularLocation>
    <subcellularLocation>
        <location evidence="1">Cytoplasm</location>
        <location evidence="1">Cytoskeleton</location>
        <location evidence="1">Spindle</location>
    </subcellularLocation>
    <subcellularLocation>
        <location evidence="1">Cleavage furrow</location>
    </subcellularLocation>
    <subcellularLocation>
        <location evidence="1">Midbody</location>
    </subcellularLocation>
    <subcellularLocation>
        <location evidence="1">Cell projection</location>
        <location evidence="1">Cilium membrane</location>
    </subcellularLocation>
    <text evidence="1">Localizes at the base of the cilia near the morphological distinction between the cilia and plasma membranes. Cytoplasm, cell cortex.</text>
</comment>
<comment type="similarity">
    <text evidence="2">Belongs to the TRAFAC class TrmE-Era-EngA-EngB-Septin-like GTPase superfamily. Septin GTPase family.</text>
</comment>
<proteinExistence type="evidence at transcript level"/>
<name>SEP2B_XENLA</name>
<organism>
    <name type="scientific">Xenopus laevis</name>
    <name type="common">African clawed frog</name>
    <dbReference type="NCBI Taxonomy" id="8355"/>
    <lineage>
        <taxon>Eukaryota</taxon>
        <taxon>Metazoa</taxon>
        <taxon>Chordata</taxon>
        <taxon>Craniata</taxon>
        <taxon>Vertebrata</taxon>
        <taxon>Euteleostomi</taxon>
        <taxon>Amphibia</taxon>
        <taxon>Batrachia</taxon>
        <taxon>Anura</taxon>
        <taxon>Pipoidea</taxon>
        <taxon>Pipidae</taxon>
        <taxon>Xenopodinae</taxon>
        <taxon>Xenopus</taxon>
        <taxon>Xenopus</taxon>
    </lineage>
</organism>
<sequence length="352" mass="40450">MSKQQAQFTNPETPGYVGFANLPNQVHRKSVRKGFEFTLMVVGESGLGKSTLINSLFLTDLYPERVVPGAANKIERTVEIEASTVEIEERGVKLRLTVVDTPGYGDAMNCVDCFKPIISYVDNQFERYLHDESGLNRRHIVDNRVHCCFYFISPFGHGLKPLDVEFMKALHNKVNIVPVIAKADTLTLRERERLKRRVLDEIEERGIKIYHLPDAESDEDEDFKEQTRLLKASIPFTVVGSNQLIEAKGKKVRGRLYPWGVVEVENPEHNDFLKLRTMLITHMQDLQEVTQDLHYENFRSERLKKGGASKVENVEVTKDQMLQEKEAELRRMQEMIARMQAQMQIQSQSGDV</sequence>
<keyword id="KW-0131">Cell cycle</keyword>
<keyword id="KW-0132">Cell division</keyword>
<keyword id="KW-1003">Cell membrane</keyword>
<keyword id="KW-0966">Cell projection</keyword>
<keyword id="KW-0963">Cytoplasm</keyword>
<keyword id="KW-0206">Cytoskeleton</keyword>
<keyword id="KW-0342">GTP-binding</keyword>
<keyword id="KW-0472">Membrane</keyword>
<keyword id="KW-0498">Mitosis</keyword>
<keyword id="KW-0547">Nucleotide-binding</keyword>
<keyword id="KW-1185">Reference proteome</keyword>